<feature type="chain" id="PRO_1000048763" description="Chromosomal replication initiator protein DnaA">
    <location>
        <begin position="1"/>
        <end position="462"/>
    </location>
</feature>
<feature type="region of interest" description="Domain I, interacts with DnaA modulators" evidence="1">
    <location>
        <begin position="1"/>
        <end position="83"/>
    </location>
</feature>
<feature type="region of interest" description="Domain II" evidence="1">
    <location>
        <begin position="83"/>
        <end position="125"/>
    </location>
</feature>
<feature type="region of interest" description="Disordered" evidence="2">
    <location>
        <begin position="104"/>
        <end position="125"/>
    </location>
</feature>
<feature type="region of interest" description="Domain III, AAA+ region" evidence="1">
    <location>
        <begin position="126"/>
        <end position="342"/>
    </location>
</feature>
<feature type="region of interest" description="Domain IV, binds dsDNA" evidence="1">
    <location>
        <begin position="343"/>
        <end position="462"/>
    </location>
</feature>
<feature type="compositionally biased region" description="Polar residues" evidence="2">
    <location>
        <begin position="112"/>
        <end position="125"/>
    </location>
</feature>
<feature type="binding site" evidence="1">
    <location>
        <position position="170"/>
    </location>
    <ligand>
        <name>ATP</name>
        <dbReference type="ChEBI" id="CHEBI:30616"/>
    </ligand>
</feature>
<feature type="binding site" evidence="1">
    <location>
        <position position="172"/>
    </location>
    <ligand>
        <name>ATP</name>
        <dbReference type="ChEBI" id="CHEBI:30616"/>
    </ligand>
</feature>
<feature type="binding site" evidence="1">
    <location>
        <position position="173"/>
    </location>
    <ligand>
        <name>ATP</name>
        <dbReference type="ChEBI" id="CHEBI:30616"/>
    </ligand>
</feature>
<feature type="binding site" evidence="1">
    <location>
        <position position="174"/>
    </location>
    <ligand>
        <name>ATP</name>
        <dbReference type="ChEBI" id="CHEBI:30616"/>
    </ligand>
</feature>
<reference key="1">
    <citation type="submission" date="2007-02" db="EMBL/GenBank/DDBJ databases">
        <title>Complete sequence of chromosome of Yersinia pestis Pestoides F.</title>
        <authorList>
            <consortium name="US DOE Joint Genome Institute"/>
            <person name="Copeland A."/>
            <person name="Lucas S."/>
            <person name="Lapidus A."/>
            <person name="Barry K."/>
            <person name="Detter J.C."/>
            <person name="Glavina del Rio T."/>
            <person name="Hammon N."/>
            <person name="Israni S."/>
            <person name="Dalin E."/>
            <person name="Tice H."/>
            <person name="Pitluck S."/>
            <person name="Di Bartolo G."/>
            <person name="Chain P."/>
            <person name="Malfatti S."/>
            <person name="Shin M."/>
            <person name="Vergez L."/>
            <person name="Schmutz J."/>
            <person name="Larimer F."/>
            <person name="Land M."/>
            <person name="Hauser L."/>
            <person name="Worsham P."/>
            <person name="Chu M."/>
            <person name="Bearden S."/>
            <person name="Garcia E."/>
            <person name="Richardson P."/>
        </authorList>
    </citation>
    <scope>NUCLEOTIDE SEQUENCE [LARGE SCALE GENOMIC DNA]</scope>
    <source>
        <strain>Pestoides F</strain>
    </source>
</reference>
<gene>
    <name evidence="1" type="primary">dnaA</name>
    <name type="ordered locus">YPDSF_0001</name>
</gene>
<name>DNAA_YERPP</name>
<proteinExistence type="inferred from homology"/>
<evidence type="ECO:0000255" key="1">
    <source>
        <dbReference type="HAMAP-Rule" id="MF_00377"/>
    </source>
</evidence>
<evidence type="ECO:0000256" key="2">
    <source>
        <dbReference type="SAM" id="MobiDB-lite"/>
    </source>
</evidence>
<sequence length="462" mass="52176">MSLSLWQQCLARLQDELPATEFSMWIRPLQAELSDNTLALYAPNRFVLDWVRDKYLNNINGLLNDFCGTEVPLLRFEVGSKPAARAHNNPVTASVSAPVAPVTRSAPMRPSWDNSPAQPELSYRSNVNPKHTFDNFVEGKSNQLARAAARQVADNPGGAYNPLFLYGGTGLGKTHLLHAVGNGIMARKANAKVVYMHSERFVQDMVKALQNNAIEEFKRYYRSVDALLIDDIQFFANKERSQEEFFHTFNALLEGNQQIILTSDRYPKEINGVEDRLKSRFGWGLTVAIEPPELETRVAILMKKADENDIRLPGEVAFFIAKRLRSNVRELEGALNRVIANANFTGRAITIDFVREALRDLLALQEKLVTIDNIQKTVAEYYKIKVADLLSKRRSRSVARPRQMAMALAKELTNHSLPEIGDAFGGRDHTTVLHACRKIEQLREESHDIKEDFSNLIRTLSS</sequence>
<accession>A4TGL5</accession>
<comment type="function">
    <text evidence="1">Plays an essential role in the initiation and regulation of chromosomal replication. ATP-DnaA binds to the origin of replication (oriC) to initiate formation of the DNA replication initiation complex once per cell cycle. Binds the DnaA box (a 9 base pair repeat at the origin) and separates the double-stranded (ds)DNA. Forms a right-handed helical filament on oriC DNA; dsDNA binds to the exterior of the filament while single-stranded (ss)DNA is stabiized in the filament's interior. The ATP-DnaA-oriC complex binds and stabilizes one strand of the AT-rich DNA unwinding element (DUE), permitting loading of DNA polymerase. After initiation quickly degrades to an ADP-DnaA complex that is not apt for DNA replication. Binds acidic phospholipids.</text>
</comment>
<comment type="subunit">
    <text evidence="1">Oligomerizes as a right-handed, spiral filament on DNA at oriC.</text>
</comment>
<comment type="subcellular location">
    <subcellularLocation>
        <location evidence="1">Cytoplasm</location>
    </subcellularLocation>
</comment>
<comment type="domain">
    <text evidence="1">Domain I is involved in oligomerization and binding regulators, domain II is flexibile and of varying length in different bacteria, domain III forms the AAA+ region, while domain IV binds dsDNA.</text>
</comment>
<comment type="similarity">
    <text evidence="1">Belongs to the DnaA family.</text>
</comment>
<dbReference type="EMBL" id="CP000668">
    <property type="protein sequence ID" value="ABP38428.1"/>
    <property type="molecule type" value="Genomic_DNA"/>
</dbReference>
<dbReference type="RefSeq" id="WP_002220732.1">
    <property type="nucleotide sequence ID" value="NZ_CP009715.1"/>
</dbReference>
<dbReference type="BMRB" id="A4TGL5"/>
<dbReference type="SMR" id="A4TGL5"/>
<dbReference type="GeneID" id="57974625"/>
<dbReference type="KEGG" id="ypp:YPDSF_0001"/>
<dbReference type="PATRIC" id="fig|386656.14.peg.578"/>
<dbReference type="GO" id="GO:0005737">
    <property type="term" value="C:cytoplasm"/>
    <property type="evidence" value="ECO:0007669"/>
    <property type="project" value="UniProtKB-SubCell"/>
</dbReference>
<dbReference type="GO" id="GO:0005886">
    <property type="term" value="C:plasma membrane"/>
    <property type="evidence" value="ECO:0007669"/>
    <property type="project" value="TreeGrafter"/>
</dbReference>
<dbReference type="GO" id="GO:0005524">
    <property type="term" value="F:ATP binding"/>
    <property type="evidence" value="ECO:0007669"/>
    <property type="project" value="UniProtKB-UniRule"/>
</dbReference>
<dbReference type="GO" id="GO:0016887">
    <property type="term" value="F:ATP hydrolysis activity"/>
    <property type="evidence" value="ECO:0007669"/>
    <property type="project" value="InterPro"/>
</dbReference>
<dbReference type="GO" id="GO:0003688">
    <property type="term" value="F:DNA replication origin binding"/>
    <property type="evidence" value="ECO:0007669"/>
    <property type="project" value="UniProtKB-UniRule"/>
</dbReference>
<dbReference type="GO" id="GO:0008289">
    <property type="term" value="F:lipid binding"/>
    <property type="evidence" value="ECO:0007669"/>
    <property type="project" value="UniProtKB-KW"/>
</dbReference>
<dbReference type="GO" id="GO:0006270">
    <property type="term" value="P:DNA replication initiation"/>
    <property type="evidence" value="ECO:0007669"/>
    <property type="project" value="UniProtKB-UniRule"/>
</dbReference>
<dbReference type="GO" id="GO:0006275">
    <property type="term" value="P:regulation of DNA replication"/>
    <property type="evidence" value="ECO:0007669"/>
    <property type="project" value="UniProtKB-UniRule"/>
</dbReference>
<dbReference type="CDD" id="cd00009">
    <property type="entry name" value="AAA"/>
    <property type="match status" value="1"/>
</dbReference>
<dbReference type="CDD" id="cd06571">
    <property type="entry name" value="Bac_DnaA_C"/>
    <property type="match status" value="1"/>
</dbReference>
<dbReference type="FunFam" id="1.10.1750.10:FF:000001">
    <property type="entry name" value="Chromosomal replication initiator protein DnaA"/>
    <property type="match status" value="1"/>
</dbReference>
<dbReference type="FunFam" id="1.10.8.60:FF:000003">
    <property type="entry name" value="Chromosomal replication initiator protein DnaA"/>
    <property type="match status" value="1"/>
</dbReference>
<dbReference type="FunFam" id="3.30.300.180:FF:000001">
    <property type="entry name" value="Chromosomal replication initiator protein DnaA"/>
    <property type="match status" value="1"/>
</dbReference>
<dbReference type="FunFam" id="3.40.50.300:FF:000103">
    <property type="entry name" value="Chromosomal replication initiator protein DnaA"/>
    <property type="match status" value="1"/>
</dbReference>
<dbReference type="Gene3D" id="1.10.1750.10">
    <property type="match status" value="1"/>
</dbReference>
<dbReference type="Gene3D" id="1.10.8.60">
    <property type="match status" value="1"/>
</dbReference>
<dbReference type="Gene3D" id="3.30.300.180">
    <property type="match status" value="1"/>
</dbReference>
<dbReference type="Gene3D" id="3.40.50.300">
    <property type="entry name" value="P-loop containing nucleotide triphosphate hydrolases"/>
    <property type="match status" value="1"/>
</dbReference>
<dbReference type="HAMAP" id="MF_00377">
    <property type="entry name" value="DnaA_bact"/>
    <property type="match status" value="1"/>
</dbReference>
<dbReference type="InterPro" id="IPR003593">
    <property type="entry name" value="AAA+_ATPase"/>
</dbReference>
<dbReference type="InterPro" id="IPR001957">
    <property type="entry name" value="Chromosome_initiator_DnaA"/>
</dbReference>
<dbReference type="InterPro" id="IPR020591">
    <property type="entry name" value="Chromosome_initiator_DnaA-like"/>
</dbReference>
<dbReference type="InterPro" id="IPR018312">
    <property type="entry name" value="Chromosome_initiator_DnaA_CS"/>
</dbReference>
<dbReference type="InterPro" id="IPR013159">
    <property type="entry name" value="DnaA_C"/>
</dbReference>
<dbReference type="InterPro" id="IPR013317">
    <property type="entry name" value="DnaA_dom"/>
</dbReference>
<dbReference type="InterPro" id="IPR024633">
    <property type="entry name" value="DnaA_N_dom"/>
</dbReference>
<dbReference type="InterPro" id="IPR038454">
    <property type="entry name" value="DnaA_N_sf"/>
</dbReference>
<dbReference type="InterPro" id="IPR027417">
    <property type="entry name" value="P-loop_NTPase"/>
</dbReference>
<dbReference type="InterPro" id="IPR010921">
    <property type="entry name" value="Trp_repressor/repl_initiator"/>
</dbReference>
<dbReference type="NCBIfam" id="TIGR00362">
    <property type="entry name" value="DnaA"/>
    <property type="match status" value="1"/>
</dbReference>
<dbReference type="PANTHER" id="PTHR30050">
    <property type="entry name" value="CHROMOSOMAL REPLICATION INITIATOR PROTEIN DNAA"/>
    <property type="match status" value="1"/>
</dbReference>
<dbReference type="PANTHER" id="PTHR30050:SF2">
    <property type="entry name" value="CHROMOSOMAL REPLICATION INITIATOR PROTEIN DNAA"/>
    <property type="match status" value="1"/>
</dbReference>
<dbReference type="Pfam" id="PF00308">
    <property type="entry name" value="Bac_DnaA"/>
    <property type="match status" value="1"/>
</dbReference>
<dbReference type="Pfam" id="PF08299">
    <property type="entry name" value="Bac_DnaA_C"/>
    <property type="match status" value="1"/>
</dbReference>
<dbReference type="Pfam" id="PF11638">
    <property type="entry name" value="DnaA_N"/>
    <property type="match status" value="1"/>
</dbReference>
<dbReference type="PRINTS" id="PR00051">
    <property type="entry name" value="DNAA"/>
</dbReference>
<dbReference type="SMART" id="SM00382">
    <property type="entry name" value="AAA"/>
    <property type="match status" value="1"/>
</dbReference>
<dbReference type="SMART" id="SM00760">
    <property type="entry name" value="Bac_DnaA_C"/>
    <property type="match status" value="1"/>
</dbReference>
<dbReference type="SUPFAM" id="SSF52540">
    <property type="entry name" value="P-loop containing nucleoside triphosphate hydrolases"/>
    <property type="match status" value="1"/>
</dbReference>
<dbReference type="SUPFAM" id="SSF48295">
    <property type="entry name" value="TrpR-like"/>
    <property type="match status" value="1"/>
</dbReference>
<dbReference type="PROSITE" id="PS01008">
    <property type="entry name" value="DNAA"/>
    <property type="match status" value="1"/>
</dbReference>
<organism>
    <name type="scientific">Yersinia pestis (strain Pestoides F)</name>
    <dbReference type="NCBI Taxonomy" id="386656"/>
    <lineage>
        <taxon>Bacteria</taxon>
        <taxon>Pseudomonadati</taxon>
        <taxon>Pseudomonadota</taxon>
        <taxon>Gammaproteobacteria</taxon>
        <taxon>Enterobacterales</taxon>
        <taxon>Yersiniaceae</taxon>
        <taxon>Yersinia</taxon>
    </lineage>
</organism>
<keyword id="KW-0067">ATP-binding</keyword>
<keyword id="KW-0963">Cytoplasm</keyword>
<keyword id="KW-0235">DNA replication</keyword>
<keyword id="KW-0238">DNA-binding</keyword>
<keyword id="KW-0446">Lipid-binding</keyword>
<keyword id="KW-0547">Nucleotide-binding</keyword>
<protein>
    <recommendedName>
        <fullName evidence="1">Chromosomal replication initiator protein DnaA</fullName>
    </recommendedName>
</protein>